<protein>
    <recommendedName>
        <fullName evidence="1">Exodeoxyribonuclease 7 small subunit</fullName>
        <ecNumber evidence="1">3.1.11.6</ecNumber>
    </recommendedName>
    <alternativeName>
        <fullName evidence="1">Exodeoxyribonuclease VII small subunit</fullName>
        <shortName evidence="1">Exonuclease VII small subunit</shortName>
    </alternativeName>
</protein>
<organism>
    <name type="scientific">Levilactobacillus brevis (strain ATCC 367 / BCRC 12310 / CIP 105137 / JCM 1170 / LMG 11437 / NCIMB 947 / NCTC 947)</name>
    <name type="common">Lactobacillus brevis</name>
    <dbReference type="NCBI Taxonomy" id="387344"/>
    <lineage>
        <taxon>Bacteria</taxon>
        <taxon>Bacillati</taxon>
        <taxon>Bacillota</taxon>
        <taxon>Bacilli</taxon>
        <taxon>Lactobacillales</taxon>
        <taxon>Lactobacillaceae</taxon>
        <taxon>Levilactobacillus</taxon>
    </lineage>
</organism>
<gene>
    <name evidence="1" type="primary">xseB</name>
    <name type="ordered locus">LVIS_0976</name>
</gene>
<reference key="1">
    <citation type="journal article" date="2006" name="Proc. Natl. Acad. Sci. U.S.A.">
        <title>Comparative genomics of the lactic acid bacteria.</title>
        <authorList>
            <person name="Makarova K.S."/>
            <person name="Slesarev A."/>
            <person name="Wolf Y.I."/>
            <person name="Sorokin A."/>
            <person name="Mirkin B."/>
            <person name="Koonin E.V."/>
            <person name="Pavlov A."/>
            <person name="Pavlova N."/>
            <person name="Karamychev V."/>
            <person name="Polouchine N."/>
            <person name="Shakhova V."/>
            <person name="Grigoriev I."/>
            <person name="Lou Y."/>
            <person name="Rohksar D."/>
            <person name="Lucas S."/>
            <person name="Huang K."/>
            <person name="Goodstein D.M."/>
            <person name="Hawkins T."/>
            <person name="Plengvidhya V."/>
            <person name="Welker D."/>
            <person name="Hughes J."/>
            <person name="Goh Y."/>
            <person name="Benson A."/>
            <person name="Baldwin K."/>
            <person name="Lee J.-H."/>
            <person name="Diaz-Muniz I."/>
            <person name="Dosti B."/>
            <person name="Smeianov V."/>
            <person name="Wechter W."/>
            <person name="Barabote R."/>
            <person name="Lorca G."/>
            <person name="Altermann E."/>
            <person name="Barrangou R."/>
            <person name="Ganesan B."/>
            <person name="Xie Y."/>
            <person name="Rawsthorne H."/>
            <person name="Tamir D."/>
            <person name="Parker C."/>
            <person name="Breidt F."/>
            <person name="Broadbent J.R."/>
            <person name="Hutkins R."/>
            <person name="O'Sullivan D."/>
            <person name="Steele J."/>
            <person name="Unlu G."/>
            <person name="Saier M.H. Jr."/>
            <person name="Klaenhammer T."/>
            <person name="Richardson P."/>
            <person name="Kozyavkin S."/>
            <person name="Weimer B.C."/>
            <person name="Mills D.A."/>
        </authorList>
    </citation>
    <scope>NUCLEOTIDE SEQUENCE [LARGE SCALE GENOMIC DNA]</scope>
    <source>
        <strain>ATCC 367 / BCRC 12310 / CIP 105137 / JCM 1170 / LMG 11437 / NCIMB 947 / NCTC 947</strain>
    </source>
</reference>
<feature type="chain" id="PRO_0000303715" description="Exodeoxyribonuclease 7 small subunit">
    <location>
        <begin position="1"/>
        <end position="81"/>
    </location>
</feature>
<feature type="region of interest" description="Disordered" evidence="2">
    <location>
        <begin position="61"/>
        <end position="81"/>
    </location>
</feature>
<name>EX7S_LEVBA</name>
<proteinExistence type="inferred from homology"/>
<keyword id="KW-0963">Cytoplasm</keyword>
<keyword id="KW-0269">Exonuclease</keyword>
<keyword id="KW-0378">Hydrolase</keyword>
<keyword id="KW-0540">Nuclease</keyword>
<keyword id="KW-1185">Reference proteome</keyword>
<comment type="function">
    <text evidence="1">Bidirectionally degrades single-stranded DNA into large acid-insoluble oligonucleotides, which are then degraded further into small acid-soluble oligonucleotides.</text>
</comment>
<comment type="catalytic activity">
    <reaction evidence="1">
        <text>Exonucleolytic cleavage in either 5'- to 3'- or 3'- to 5'-direction to yield nucleoside 5'-phosphates.</text>
        <dbReference type="EC" id="3.1.11.6"/>
    </reaction>
</comment>
<comment type="subunit">
    <text evidence="1">Heterooligomer composed of large and small subunits.</text>
</comment>
<comment type="subcellular location">
    <subcellularLocation>
        <location evidence="1">Cytoplasm</location>
    </subcellularLocation>
</comment>
<comment type="similarity">
    <text evidence="1">Belongs to the XseB family.</text>
</comment>
<accession>Q03RR3</accession>
<sequence length="81" mass="8848">MSEEQPTFEENLATLETIVAQLEQGDIPLEQALTQFQKGVALSKELQTTLQDAEKTLTTMMNDSDQEVAFETPQGGTGDAD</sequence>
<evidence type="ECO:0000255" key="1">
    <source>
        <dbReference type="HAMAP-Rule" id="MF_00337"/>
    </source>
</evidence>
<evidence type="ECO:0000256" key="2">
    <source>
        <dbReference type="SAM" id="MobiDB-lite"/>
    </source>
</evidence>
<dbReference type="EC" id="3.1.11.6" evidence="1"/>
<dbReference type="EMBL" id="CP000416">
    <property type="protein sequence ID" value="ABJ64109.1"/>
    <property type="molecule type" value="Genomic_DNA"/>
</dbReference>
<dbReference type="RefSeq" id="WP_011667699.1">
    <property type="nucleotide sequence ID" value="NC_008497.1"/>
</dbReference>
<dbReference type="SMR" id="Q03RR3"/>
<dbReference type="STRING" id="387344.LVIS_0976"/>
<dbReference type="KEGG" id="lbr:LVIS_0976"/>
<dbReference type="eggNOG" id="COG1722">
    <property type="taxonomic scope" value="Bacteria"/>
</dbReference>
<dbReference type="HOGENOM" id="CLU_145918_3_2_9"/>
<dbReference type="Proteomes" id="UP000001652">
    <property type="component" value="Chromosome"/>
</dbReference>
<dbReference type="GO" id="GO:0005829">
    <property type="term" value="C:cytosol"/>
    <property type="evidence" value="ECO:0007669"/>
    <property type="project" value="TreeGrafter"/>
</dbReference>
<dbReference type="GO" id="GO:0009318">
    <property type="term" value="C:exodeoxyribonuclease VII complex"/>
    <property type="evidence" value="ECO:0007669"/>
    <property type="project" value="InterPro"/>
</dbReference>
<dbReference type="GO" id="GO:0008855">
    <property type="term" value="F:exodeoxyribonuclease VII activity"/>
    <property type="evidence" value="ECO:0007669"/>
    <property type="project" value="UniProtKB-UniRule"/>
</dbReference>
<dbReference type="GO" id="GO:0006308">
    <property type="term" value="P:DNA catabolic process"/>
    <property type="evidence" value="ECO:0007669"/>
    <property type="project" value="UniProtKB-UniRule"/>
</dbReference>
<dbReference type="Gene3D" id="1.10.287.1040">
    <property type="entry name" value="Exonuclease VII, small subunit"/>
    <property type="match status" value="1"/>
</dbReference>
<dbReference type="HAMAP" id="MF_00337">
    <property type="entry name" value="Exonuc_7_S"/>
    <property type="match status" value="1"/>
</dbReference>
<dbReference type="InterPro" id="IPR003761">
    <property type="entry name" value="Exonuc_VII_S"/>
</dbReference>
<dbReference type="InterPro" id="IPR037004">
    <property type="entry name" value="Exonuc_VII_ssu_sf"/>
</dbReference>
<dbReference type="NCBIfam" id="NF002138">
    <property type="entry name" value="PRK00977.1-2"/>
    <property type="match status" value="1"/>
</dbReference>
<dbReference type="NCBIfam" id="TIGR01280">
    <property type="entry name" value="xseB"/>
    <property type="match status" value="1"/>
</dbReference>
<dbReference type="PANTHER" id="PTHR34137">
    <property type="entry name" value="EXODEOXYRIBONUCLEASE 7 SMALL SUBUNIT"/>
    <property type="match status" value="1"/>
</dbReference>
<dbReference type="PANTHER" id="PTHR34137:SF1">
    <property type="entry name" value="EXODEOXYRIBONUCLEASE 7 SMALL SUBUNIT"/>
    <property type="match status" value="1"/>
</dbReference>
<dbReference type="Pfam" id="PF02609">
    <property type="entry name" value="Exonuc_VII_S"/>
    <property type="match status" value="1"/>
</dbReference>
<dbReference type="PIRSF" id="PIRSF006488">
    <property type="entry name" value="Exonuc_VII_S"/>
    <property type="match status" value="1"/>
</dbReference>
<dbReference type="SUPFAM" id="SSF116842">
    <property type="entry name" value="XseB-like"/>
    <property type="match status" value="1"/>
</dbReference>